<keyword id="KW-0025">Alternative splicing</keyword>
<keyword id="KW-0963">Cytoplasm</keyword>
<keyword id="KW-0378">Hydrolase</keyword>
<keyword id="KW-0460">Magnesium</keyword>
<keyword id="KW-0479">Metal-binding</keyword>
<keyword id="KW-1185">Reference proteome</keyword>
<dbReference type="EC" id="3.6.1.1" evidence="3"/>
<dbReference type="EMBL" id="BX284604">
    <property type="protein sequence ID" value="CAA93107.4"/>
    <property type="molecule type" value="Genomic_DNA"/>
</dbReference>
<dbReference type="EMBL" id="BX284604">
    <property type="protein sequence ID" value="CAD89727.1"/>
    <property type="molecule type" value="Genomic_DNA"/>
</dbReference>
<dbReference type="EMBL" id="BX284604">
    <property type="protein sequence ID" value="CAD89728.1"/>
    <property type="molecule type" value="Genomic_DNA"/>
</dbReference>
<dbReference type="PIR" id="E88797">
    <property type="entry name" value="E88797"/>
</dbReference>
<dbReference type="PIR" id="T20014">
    <property type="entry name" value="T20014"/>
</dbReference>
<dbReference type="RefSeq" id="NP_001023073.1">
    <molecule id="Q18680-2"/>
    <property type="nucleotide sequence ID" value="NM_001027902.4"/>
</dbReference>
<dbReference type="RefSeq" id="NP_001023075.2">
    <molecule id="Q18680-1"/>
    <property type="nucleotide sequence ID" value="NM_001027904.7"/>
</dbReference>
<dbReference type="RefSeq" id="NP_001023076.1">
    <molecule id="Q18680-4"/>
    <property type="nucleotide sequence ID" value="NM_001027905.7"/>
</dbReference>
<dbReference type="SMR" id="Q18680"/>
<dbReference type="BioGRID" id="42959">
    <property type="interactions" value="17"/>
</dbReference>
<dbReference type="FunCoup" id="Q18680">
    <property type="interactions" value="2603"/>
</dbReference>
<dbReference type="STRING" id="6239.C47E12.4c.3"/>
<dbReference type="PaxDb" id="6239-C47E12.4b"/>
<dbReference type="PeptideAtlas" id="Q18680"/>
<dbReference type="EnsemblMetazoa" id="C47E12.4a.1">
    <molecule id="Q18680-2"/>
    <property type="protein sequence ID" value="C47E12.4a.1"/>
    <property type="gene ID" value="WBGene00008149"/>
</dbReference>
<dbReference type="EnsemblMetazoa" id="C47E12.4c.1">
    <molecule id="Q18680-1"/>
    <property type="protein sequence ID" value="C47E12.4c.1"/>
    <property type="gene ID" value="WBGene00008149"/>
</dbReference>
<dbReference type="EnsemblMetazoa" id="C47E12.4d.1">
    <molecule id="Q18680-4"/>
    <property type="protein sequence ID" value="C47E12.4d.1"/>
    <property type="gene ID" value="WBGene00008149"/>
</dbReference>
<dbReference type="GeneID" id="177856"/>
<dbReference type="KEGG" id="cel:CELE_C47E12.4"/>
<dbReference type="UCSC" id="C47E12.5a.1">
    <molecule id="Q18680-1"/>
    <property type="organism name" value="c. elegans"/>
</dbReference>
<dbReference type="AGR" id="WB:WBGene00008149"/>
<dbReference type="CTD" id="177856"/>
<dbReference type="WormBase" id="C47E12.4a">
    <molecule id="Q18680-2"/>
    <property type="protein sequence ID" value="CE33767"/>
    <property type="gene ID" value="WBGene00008149"/>
    <property type="gene designation" value="pyp-1"/>
</dbReference>
<dbReference type="WormBase" id="C47E12.4c">
    <molecule id="Q18680-1"/>
    <property type="protein sequence ID" value="CE48296"/>
    <property type="gene ID" value="WBGene00008149"/>
    <property type="gene designation" value="pyp-1"/>
</dbReference>
<dbReference type="WormBase" id="C47E12.4d">
    <molecule id="Q18680-4"/>
    <property type="protein sequence ID" value="CE05448"/>
    <property type="gene ID" value="WBGene00008149"/>
    <property type="gene designation" value="pyp-1"/>
</dbReference>
<dbReference type="eggNOG" id="KOG1626">
    <property type="taxonomic scope" value="Eukaryota"/>
</dbReference>
<dbReference type="GeneTree" id="ENSGT00390000017004"/>
<dbReference type="HOGENOM" id="CLU_040684_3_0_1"/>
<dbReference type="InParanoid" id="Q18680"/>
<dbReference type="OrthoDB" id="1608002at2759"/>
<dbReference type="BRENDA" id="3.6.1.1">
    <property type="organism ID" value="1045"/>
</dbReference>
<dbReference type="Reactome" id="R-CEL-379716">
    <property type="pathway name" value="Cytosolic tRNA aminoacylation"/>
</dbReference>
<dbReference type="Reactome" id="R-CEL-379726">
    <property type="pathway name" value="Mitochondrial tRNA aminoacylation"/>
</dbReference>
<dbReference type="Reactome" id="R-CEL-71737">
    <property type="pathway name" value="Pyrophosphate hydrolysis"/>
</dbReference>
<dbReference type="PRO" id="PR:Q18680"/>
<dbReference type="Proteomes" id="UP000001940">
    <property type="component" value="Chromosome IV"/>
</dbReference>
<dbReference type="Bgee" id="WBGene00008149">
    <property type="expression patterns" value="Expressed in germ line (C elegans) and 4 other cell types or tissues"/>
</dbReference>
<dbReference type="GO" id="GO:0005737">
    <property type="term" value="C:cytoplasm"/>
    <property type="evidence" value="ECO:0000314"/>
    <property type="project" value="WormBase"/>
</dbReference>
<dbReference type="GO" id="GO:0043005">
    <property type="term" value="C:neuron projection"/>
    <property type="evidence" value="ECO:0000314"/>
    <property type="project" value="WormBase"/>
</dbReference>
<dbReference type="GO" id="GO:0005773">
    <property type="term" value="C:vacuole"/>
    <property type="evidence" value="ECO:0000314"/>
    <property type="project" value="WormBase"/>
</dbReference>
<dbReference type="GO" id="GO:0004427">
    <property type="term" value="F:inorganic diphosphate phosphatase activity"/>
    <property type="evidence" value="ECO:0000318"/>
    <property type="project" value="GO_Central"/>
</dbReference>
<dbReference type="GO" id="GO:0000287">
    <property type="term" value="F:magnesium ion binding"/>
    <property type="evidence" value="ECO:0007669"/>
    <property type="project" value="InterPro"/>
</dbReference>
<dbReference type="GO" id="GO:0045087">
    <property type="term" value="P:innate immune response"/>
    <property type="evidence" value="ECO:0007007"/>
    <property type="project" value="WormBase"/>
</dbReference>
<dbReference type="GO" id="GO:0006796">
    <property type="term" value="P:phosphate-containing compound metabolic process"/>
    <property type="evidence" value="ECO:0000318"/>
    <property type="project" value="GO_Central"/>
</dbReference>
<dbReference type="CDD" id="cd00412">
    <property type="entry name" value="pyrophosphatase"/>
    <property type="match status" value="1"/>
</dbReference>
<dbReference type="FunFam" id="3.90.80.10:FF:000009">
    <property type="entry name" value="Inorganic pyrophosphatase"/>
    <property type="match status" value="1"/>
</dbReference>
<dbReference type="Gene3D" id="3.90.80.10">
    <property type="entry name" value="Inorganic pyrophosphatase"/>
    <property type="match status" value="1"/>
</dbReference>
<dbReference type="InterPro" id="IPR008162">
    <property type="entry name" value="Pyrophosphatase"/>
</dbReference>
<dbReference type="InterPro" id="IPR036649">
    <property type="entry name" value="Pyrophosphatase_sf"/>
</dbReference>
<dbReference type="PANTHER" id="PTHR10286">
    <property type="entry name" value="INORGANIC PYROPHOSPHATASE"/>
    <property type="match status" value="1"/>
</dbReference>
<dbReference type="Pfam" id="PF00719">
    <property type="entry name" value="Pyrophosphatase"/>
    <property type="match status" value="1"/>
</dbReference>
<dbReference type="SUPFAM" id="SSF50324">
    <property type="entry name" value="Inorganic pyrophosphatase"/>
    <property type="match status" value="1"/>
</dbReference>
<dbReference type="PROSITE" id="PS00387">
    <property type="entry name" value="PPASE"/>
    <property type="match status" value="1"/>
</dbReference>
<evidence type="ECO:0000250" key="1">
    <source>
        <dbReference type="UniProtKB" id="P9WI55"/>
    </source>
</evidence>
<evidence type="ECO:0000256" key="2">
    <source>
        <dbReference type="SAM" id="MobiDB-lite"/>
    </source>
</evidence>
<evidence type="ECO:0000269" key="3">
    <source>
    </source>
</evidence>
<evidence type="ECO:0000305" key="4"/>
<evidence type="ECO:0000312" key="5">
    <source>
        <dbReference type="WormBase" id="C47E12.4a"/>
    </source>
</evidence>
<evidence type="ECO:0000312" key="6">
    <source>
        <dbReference type="WormBase" id="C47E12.4c"/>
    </source>
</evidence>
<evidence type="ECO:0000312" key="7">
    <source>
        <dbReference type="WormBase" id="C47E12.4d"/>
    </source>
</evidence>
<accession>Q18680</accession>
<accession>Q86DB1</accession>
<accession>Q86DB2</accession>
<accession>Q86DB3</accession>
<comment type="function">
    <text evidence="3">Catalyzes the hydrolysis of inorganic pyrophosphate (PPi) forming two phosphate ions. Plays a role in intestinal development and subsequent normal secretory, digestive and absorption functions. Required for larval development.</text>
</comment>
<comment type="catalytic activity">
    <reaction evidence="3">
        <text>diphosphate + H2O = 2 phosphate + H(+)</text>
        <dbReference type="Rhea" id="RHEA:24576"/>
        <dbReference type="ChEBI" id="CHEBI:15377"/>
        <dbReference type="ChEBI" id="CHEBI:15378"/>
        <dbReference type="ChEBI" id="CHEBI:33019"/>
        <dbReference type="ChEBI" id="CHEBI:43474"/>
        <dbReference type="EC" id="3.6.1.1"/>
    </reaction>
</comment>
<comment type="cofactor">
    <cofactor evidence="1">
        <name>Mg(2+)</name>
        <dbReference type="ChEBI" id="CHEBI:18420"/>
    </cofactor>
</comment>
<comment type="subcellular location">
    <subcellularLocation>
        <location evidence="3">Cytoplasm</location>
    </subcellularLocation>
    <text evidence="3">In intestinal cells, localizes around intestinal granules and vacuoles.</text>
</comment>
<comment type="alternative products">
    <event type="alternative splicing"/>
    <isoform>
        <id>Q18680-1</id>
        <name evidence="6">c</name>
        <sequence type="displayed"/>
    </isoform>
    <isoform>
        <id>Q18680-2</id>
        <name evidence="5">a</name>
        <sequence type="described" ref="VSP_059613"/>
    </isoform>
    <isoform>
        <id>Q18680-4</id>
        <name evidence="7">d</name>
        <sequence type="described" ref="VSP_059612"/>
    </isoform>
</comment>
<comment type="tissue specificity">
    <text evidence="3">Expressed in coelomocytes, the intestine and in the nervous system including the nerve cords and sensory neurons.</text>
</comment>
<comment type="developmental stage">
    <text evidence="3">Expressed from the embryonic stage of development to adulthood.</text>
</comment>
<comment type="similarity">
    <text evidence="4">Belongs to the PPase family.</text>
</comment>
<feature type="chain" id="PRO_0000137571" description="Inorganic pyrophosphatase 1">
    <location>
        <begin position="1"/>
        <end position="427"/>
    </location>
</feature>
<feature type="region of interest" description="Disordered" evidence="2">
    <location>
        <begin position="36"/>
        <end position="63"/>
    </location>
</feature>
<feature type="region of interest" description="Disordered" evidence="2">
    <location>
        <begin position="77"/>
        <end position="118"/>
    </location>
</feature>
<feature type="compositionally biased region" description="Low complexity" evidence="2">
    <location>
        <begin position="36"/>
        <end position="52"/>
    </location>
</feature>
<feature type="compositionally biased region" description="Polar residues" evidence="2">
    <location>
        <begin position="53"/>
        <end position="63"/>
    </location>
</feature>
<feature type="compositionally biased region" description="Polar residues" evidence="2">
    <location>
        <begin position="77"/>
        <end position="114"/>
    </location>
</feature>
<feature type="binding site" evidence="1">
    <location>
        <position position="259"/>
    </location>
    <ligand>
        <name>Mg(2+)</name>
        <dbReference type="ChEBI" id="CHEBI:18420"/>
        <label>1</label>
    </ligand>
</feature>
<feature type="binding site" evidence="1">
    <location>
        <position position="264"/>
    </location>
    <ligand>
        <name>Mg(2+)</name>
        <dbReference type="ChEBI" id="CHEBI:18420"/>
        <label>1</label>
    </ligand>
</feature>
<feature type="binding site" evidence="1">
    <location>
        <position position="264"/>
    </location>
    <ligand>
        <name>Mg(2+)</name>
        <dbReference type="ChEBI" id="CHEBI:18420"/>
        <label>2</label>
    </ligand>
</feature>
<feature type="binding site" evidence="1">
    <location>
        <position position="296"/>
    </location>
    <ligand>
        <name>Mg(2+)</name>
        <dbReference type="ChEBI" id="CHEBI:18420"/>
        <label>1</label>
    </ligand>
</feature>
<feature type="splice variant" id="VSP_059612" description="In isoform d." evidence="4">
    <location>
        <begin position="1"/>
        <end position="135"/>
    </location>
</feature>
<feature type="splice variant" id="VSP_059613" description="In isoform a." evidence="4">
    <original>MILSCRSVATARGFLLSTRLIMGCAVSQESAIATVSSSSNTATTSTSSSNTSQKWATSRTSRPVTNVTQVSAIHTTSMDSGSSTVQLPSPRGSLTTAVSTSSSGAQRQMSANSERSLH</original>
    <variation>MGLVLIAKRNKPLIAMMAAILFTVAVFLA</variation>
    <location>
        <begin position="1"/>
        <end position="118"/>
    </location>
</feature>
<protein>
    <recommendedName>
        <fullName evidence="6">Inorganic pyrophosphatase 1</fullName>
        <ecNumber evidence="3">3.6.1.1</ecNumber>
    </recommendedName>
    <alternativeName>
        <fullName>Pyrophosphate phospho-hydrolase</fullName>
        <shortName>PPase</shortName>
    </alternativeName>
</protein>
<name>IPYR_CAEEL</name>
<gene>
    <name evidence="6" type="primary">pyp-1</name>
    <name evidence="6" type="ORF">C47E12.4</name>
</gene>
<organism>
    <name type="scientific">Caenorhabditis elegans</name>
    <dbReference type="NCBI Taxonomy" id="6239"/>
    <lineage>
        <taxon>Eukaryota</taxon>
        <taxon>Metazoa</taxon>
        <taxon>Ecdysozoa</taxon>
        <taxon>Nematoda</taxon>
        <taxon>Chromadorea</taxon>
        <taxon>Rhabditida</taxon>
        <taxon>Rhabditina</taxon>
        <taxon>Rhabditomorpha</taxon>
        <taxon>Rhabditoidea</taxon>
        <taxon>Rhabditidae</taxon>
        <taxon>Peloderinae</taxon>
        <taxon>Caenorhabditis</taxon>
    </lineage>
</organism>
<proteinExistence type="evidence at protein level"/>
<sequence length="427" mass="46330">MILSCRSVATARGFLLSTRLIMGCAVSQESAIATVSSSSNTATTSTSSSNTSQKWATSRTSRPVTNVTQVSAIHTTSMDSGSSTVQLPSPRGSLTTAVSTSSSGAQRQMSANSERSLHTRPLSETAVILQSQAVKMSTGAGDSAVYEAVERGSLYSLDYRVYIKGPQGIVSPWHDIPLFANKDKRVYNMIVEIPRWTNAKMEMATKEPFSPIKQDEKKGVARFVHNIFPHKGYIWNYGALPQTWEDPNHVVPDTGAKGDNDPIDVIEVGSKVAGRGAVLQVKVLGTLALIDEGETDWKLVAIDVNDENADKLNDIDDVEKVYPGLLAASVEWFRNYKIPAGKPANEFAFNGEFKNREYAEKVIDETNEYWKTLIKEANPSLNTVSRVPEAVHQGTDEAAATAIGATPEHGANAPLPGDVDKWHFVQG</sequence>
<reference key="1">
    <citation type="journal article" date="1998" name="Science">
        <title>Genome sequence of the nematode C. elegans: a platform for investigating biology.</title>
        <authorList>
            <consortium name="The C. elegans sequencing consortium"/>
        </authorList>
    </citation>
    <scope>NUCLEOTIDE SEQUENCE [LARGE SCALE GENOMIC DNA]</scope>
    <source>
        <strain>Bristol N2</strain>
    </source>
</reference>
<reference key="2">
    <citation type="journal article" date="2007" name="FEBS Lett.">
        <title>PYP-1, inorganic pyrophosphatase, is required for larval development and intestinal function in C. elegans.</title>
        <authorList>
            <person name="Ko K.M."/>
            <person name="Lee W."/>
            <person name="Yu J.R."/>
            <person name="Ahnn J."/>
        </authorList>
    </citation>
    <scope>FUNCTION</scope>
    <scope>CATALYTIC ACTIVITY</scope>
    <scope>SUBCELLULAR LOCATION</scope>
    <scope>TISSUE SPECIFICITY</scope>
    <scope>DEVELOPMENTAL STAGE</scope>
</reference>